<comment type="catalytic activity">
    <reaction evidence="1">
        <text>urea + 2 H2O + H(+) = hydrogencarbonate + 2 NH4(+)</text>
        <dbReference type="Rhea" id="RHEA:20557"/>
        <dbReference type="ChEBI" id="CHEBI:15377"/>
        <dbReference type="ChEBI" id="CHEBI:15378"/>
        <dbReference type="ChEBI" id="CHEBI:16199"/>
        <dbReference type="ChEBI" id="CHEBI:17544"/>
        <dbReference type="ChEBI" id="CHEBI:28938"/>
        <dbReference type="EC" id="3.5.1.5"/>
    </reaction>
</comment>
<comment type="cofactor">
    <cofactor evidence="1">
        <name>Ni cation</name>
        <dbReference type="ChEBI" id="CHEBI:25516"/>
    </cofactor>
    <text evidence="1">Binds 2 nickel ions per subunit.</text>
</comment>
<comment type="pathway">
    <text evidence="1">Nitrogen metabolism; urea degradation; CO(2) and NH(3) from urea (urease route): step 1/1.</text>
</comment>
<comment type="subunit">
    <text evidence="1">Heterotrimer of UreA (gamma), UreB (beta) and UreC (alpha) subunits. Three heterotrimers associate to form the active enzyme.</text>
</comment>
<comment type="subcellular location">
    <subcellularLocation>
        <location evidence="1">Cytoplasm</location>
    </subcellularLocation>
</comment>
<comment type="PTM">
    <text evidence="1">Carboxylation allows a single lysine to coordinate two nickel ions.</text>
</comment>
<comment type="similarity">
    <text evidence="1">Belongs to the metallo-dependent hydrolases superfamily. Urease alpha subunit family.</text>
</comment>
<accession>Q2K517</accession>
<gene>
    <name evidence="1" type="primary">ureC</name>
    <name type="ordered locus">RHE_CH03305</name>
</gene>
<dbReference type="EC" id="3.5.1.5" evidence="1"/>
<dbReference type="EMBL" id="CP000133">
    <property type="protein sequence ID" value="ABC92069.1"/>
    <property type="molecule type" value="Genomic_DNA"/>
</dbReference>
<dbReference type="RefSeq" id="WP_011426539.1">
    <property type="nucleotide sequence ID" value="NC_007761.1"/>
</dbReference>
<dbReference type="SMR" id="Q2K517"/>
<dbReference type="KEGG" id="ret:RHE_CH03305"/>
<dbReference type="eggNOG" id="COG0804">
    <property type="taxonomic scope" value="Bacteria"/>
</dbReference>
<dbReference type="HOGENOM" id="CLU_000980_0_0_5"/>
<dbReference type="OrthoDB" id="9802793at2"/>
<dbReference type="UniPathway" id="UPA00258">
    <property type="reaction ID" value="UER00370"/>
</dbReference>
<dbReference type="Proteomes" id="UP000001936">
    <property type="component" value="Chromosome"/>
</dbReference>
<dbReference type="GO" id="GO:0005737">
    <property type="term" value="C:cytoplasm"/>
    <property type="evidence" value="ECO:0007669"/>
    <property type="project" value="UniProtKB-SubCell"/>
</dbReference>
<dbReference type="GO" id="GO:0016151">
    <property type="term" value="F:nickel cation binding"/>
    <property type="evidence" value="ECO:0007669"/>
    <property type="project" value="UniProtKB-UniRule"/>
</dbReference>
<dbReference type="GO" id="GO:0009039">
    <property type="term" value="F:urease activity"/>
    <property type="evidence" value="ECO:0007669"/>
    <property type="project" value="UniProtKB-UniRule"/>
</dbReference>
<dbReference type="GO" id="GO:0043419">
    <property type="term" value="P:urea catabolic process"/>
    <property type="evidence" value="ECO:0007669"/>
    <property type="project" value="UniProtKB-UniRule"/>
</dbReference>
<dbReference type="CDD" id="cd00375">
    <property type="entry name" value="Urease_alpha"/>
    <property type="match status" value="1"/>
</dbReference>
<dbReference type="Gene3D" id="3.20.20.140">
    <property type="entry name" value="Metal-dependent hydrolases"/>
    <property type="match status" value="1"/>
</dbReference>
<dbReference type="Gene3D" id="2.30.40.10">
    <property type="entry name" value="Urease, subunit C, domain 1"/>
    <property type="match status" value="1"/>
</dbReference>
<dbReference type="HAMAP" id="MF_01953">
    <property type="entry name" value="Urease_alpha"/>
    <property type="match status" value="1"/>
</dbReference>
<dbReference type="InterPro" id="IPR006680">
    <property type="entry name" value="Amidohydro-rel"/>
</dbReference>
<dbReference type="InterPro" id="IPR011059">
    <property type="entry name" value="Metal-dep_hydrolase_composite"/>
</dbReference>
<dbReference type="InterPro" id="IPR032466">
    <property type="entry name" value="Metal_Hydrolase"/>
</dbReference>
<dbReference type="InterPro" id="IPR011612">
    <property type="entry name" value="Urease_alpha_N_dom"/>
</dbReference>
<dbReference type="InterPro" id="IPR050112">
    <property type="entry name" value="Urease_alpha_subunit"/>
</dbReference>
<dbReference type="InterPro" id="IPR017950">
    <property type="entry name" value="Urease_AS"/>
</dbReference>
<dbReference type="InterPro" id="IPR005848">
    <property type="entry name" value="Urease_asu"/>
</dbReference>
<dbReference type="InterPro" id="IPR017951">
    <property type="entry name" value="Urease_asu_c"/>
</dbReference>
<dbReference type="InterPro" id="IPR029754">
    <property type="entry name" value="Urease_Ni-bd"/>
</dbReference>
<dbReference type="NCBIfam" id="NF009685">
    <property type="entry name" value="PRK13206.1"/>
    <property type="match status" value="1"/>
</dbReference>
<dbReference type="NCBIfam" id="NF009686">
    <property type="entry name" value="PRK13207.1"/>
    <property type="match status" value="1"/>
</dbReference>
<dbReference type="NCBIfam" id="TIGR01792">
    <property type="entry name" value="urease_alph"/>
    <property type="match status" value="1"/>
</dbReference>
<dbReference type="PANTHER" id="PTHR43440">
    <property type="entry name" value="UREASE"/>
    <property type="match status" value="1"/>
</dbReference>
<dbReference type="PANTHER" id="PTHR43440:SF1">
    <property type="entry name" value="UREASE"/>
    <property type="match status" value="1"/>
</dbReference>
<dbReference type="Pfam" id="PF01979">
    <property type="entry name" value="Amidohydro_1"/>
    <property type="match status" value="1"/>
</dbReference>
<dbReference type="Pfam" id="PF00449">
    <property type="entry name" value="Urease_alpha"/>
    <property type="match status" value="1"/>
</dbReference>
<dbReference type="PRINTS" id="PR01752">
    <property type="entry name" value="UREASE"/>
</dbReference>
<dbReference type="SUPFAM" id="SSF51338">
    <property type="entry name" value="Composite domain of metallo-dependent hydrolases"/>
    <property type="match status" value="2"/>
</dbReference>
<dbReference type="SUPFAM" id="SSF51556">
    <property type="entry name" value="Metallo-dependent hydrolases"/>
    <property type="match status" value="1"/>
</dbReference>
<dbReference type="PROSITE" id="PS01120">
    <property type="entry name" value="UREASE_1"/>
    <property type="match status" value="1"/>
</dbReference>
<dbReference type="PROSITE" id="PS00145">
    <property type="entry name" value="UREASE_2"/>
    <property type="match status" value="1"/>
</dbReference>
<dbReference type="PROSITE" id="PS51368">
    <property type="entry name" value="UREASE_3"/>
    <property type="match status" value="1"/>
</dbReference>
<sequence length="570" mass="60607">MPYKISRAAYAGMFGPTTGDKVRLADTELFIEIEKDFTTYGEEVKFGGGKVIRDGMGQSQVTRADGAVDTVITNAVIVDHSGIYKADIGLKNGRIAAIGKAGNPDMQPGVNIIVGPGTEAIAGEGKIVTAGGMDSHIHFIAPQQIEEALMSGMTCMLGGGTGPAHGTLATTCTPGPWHIARMIEAADAFPMNLAFAGKGNASLPGALTEMVLAGATSLKLHEDWGTTPGAIDCCLSVADDYDVQVMIHTDTLNESGFVEDTIGAIKGRTIHAFHTEGAGGGHAPDIIKICGQPNVIPSSTNPTRPYTVNTIAEHLDMLMVCHHLSPSIPEDIAFAESRIRKETIAAEDILHDIGAFSIISSDSQAMGRVGEVAIRTWQTADKMKRQRGRLKEENGDNDNFRVRRYIAKYTINPAIAHGLSHEIGSVETGKRADLVLWNPAFFGVKPDMVLLGGSIAAAPMGDPNASIPTPQPVHYRPMFASYGKSLTNSSVTFVSQASLDAGLKGRLGVAKELVAVKNTRGGISKASMIHNDLTPEIEVDPETYDVRANGELLTCEPATVLPMAQRYFLF</sequence>
<proteinExistence type="inferred from homology"/>
<keyword id="KW-0963">Cytoplasm</keyword>
<keyword id="KW-0378">Hydrolase</keyword>
<keyword id="KW-0479">Metal-binding</keyword>
<keyword id="KW-0533">Nickel</keyword>
<keyword id="KW-1185">Reference proteome</keyword>
<feature type="chain" id="PRO_0000239882" description="Urease subunit alpha">
    <location>
        <begin position="1"/>
        <end position="570"/>
    </location>
</feature>
<feature type="domain" description="Urease" evidence="1">
    <location>
        <begin position="131"/>
        <end position="570"/>
    </location>
</feature>
<feature type="active site" description="Proton donor" evidence="1">
    <location>
        <position position="322"/>
    </location>
</feature>
<feature type="binding site" evidence="1">
    <location>
        <position position="136"/>
    </location>
    <ligand>
        <name>Ni(2+)</name>
        <dbReference type="ChEBI" id="CHEBI:49786"/>
        <label>1</label>
    </ligand>
</feature>
<feature type="binding site" evidence="1">
    <location>
        <position position="138"/>
    </location>
    <ligand>
        <name>Ni(2+)</name>
        <dbReference type="ChEBI" id="CHEBI:49786"/>
        <label>1</label>
    </ligand>
</feature>
<feature type="binding site" description="via carbamate group" evidence="1">
    <location>
        <position position="219"/>
    </location>
    <ligand>
        <name>Ni(2+)</name>
        <dbReference type="ChEBI" id="CHEBI:49786"/>
        <label>1</label>
    </ligand>
</feature>
<feature type="binding site" description="via carbamate group" evidence="1">
    <location>
        <position position="219"/>
    </location>
    <ligand>
        <name>Ni(2+)</name>
        <dbReference type="ChEBI" id="CHEBI:49786"/>
        <label>2</label>
    </ligand>
</feature>
<feature type="binding site" evidence="1">
    <location>
        <position position="221"/>
    </location>
    <ligand>
        <name>substrate</name>
    </ligand>
</feature>
<feature type="binding site" evidence="1">
    <location>
        <position position="248"/>
    </location>
    <ligand>
        <name>Ni(2+)</name>
        <dbReference type="ChEBI" id="CHEBI:49786"/>
        <label>2</label>
    </ligand>
</feature>
<feature type="binding site" evidence="1">
    <location>
        <position position="274"/>
    </location>
    <ligand>
        <name>Ni(2+)</name>
        <dbReference type="ChEBI" id="CHEBI:49786"/>
        <label>2</label>
    </ligand>
</feature>
<feature type="binding site" evidence="1">
    <location>
        <position position="362"/>
    </location>
    <ligand>
        <name>Ni(2+)</name>
        <dbReference type="ChEBI" id="CHEBI:49786"/>
        <label>1</label>
    </ligand>
</feature>
<feature type="modified residue" description="N6-carboxylysine" evidence="1">
    <location>
        <position position="219"/>
    </location>
</feature>
<organism>
    <name type="scientific">Rhizobium etli (strain ATCC 51251 / DSM 11541 / JCM 21823 / NBRC 15573 / CFN 42)</name>
    <dbReference type="NCBI Taxonomy" id="347834"/>
    <lineage>
        <taxon>Bacteria</taxon>
        <taxon>Pseudomonadati</taxon>
        <taxon>Pseudomonadota</taxon>
        <taxon>Alphaproteobacteria</taxon>
        <taxon>Hyphomicrobiales</taxon>
        <taxon>Rhizobiaceae</taxon>
        <taxon>Rhizobium/Agrobacterium group</taxon>
        <taxon>Rhizobium</taxon>
    </lineage>
</organism>
<name>URE1_RHIEC</name>
<protein>
    <recommendedName>
        <fullName evidence="1">Urease subunit alpha</fullName>
        <ecNumber evidence="1">3.5.1.5</ecNumber>
    </recommendedName>
    <alternativeName>
        <fullName evidence="1">Urea amidohydrolase subunit alpha</fullName>
    </alternativeName>
</protein>
<reference key="1">
    <citation type="journal article" date="2006" name="Proc. Natl. Acad. Sci. U.S.A.">
        <title>The partitioned Rhizobium etli genome: genetic and metabolic redundancy in seven interacting replicons.</title>
        <authorList>
            <person name="Gonzalez V."/>
            <person name="Santamaria R.I."/>
            <person name="Bustos P."/>
            <person name="Hernandez-Gonzalez I."/>
            <person name="Medrano-Soto A."/>
            <person name="Moreno-Hagelsieb G."/>
            <person name="Janga S.C."/>
            <person name="Ramirez M.A."/>
            <person name="Jimenez-Jacinto V."/>
            <person name="Collado-Vides J."/>
            <person name="Davila G."/>
        </authorList>
    </citation>
    <scope>NUCLEOTIDE SEQUENCE [LARGE SCALE GENOMIC DNA]</scope>
    <source>
        <strain>ATCC 51251 / DSM 11541 / JCM 21823 / NBRC 15573 / CFN 42</strain>
    </source>
</reference>
<evidence type="ECO:0000255" key="1">
    <source>
        <dbReference type="HAMAP-Rule" id="MF_01953"/>
    </source>
</evidence>